<proteinExistence type="inferred from homology"/>
<evidence type="ECO:0000255" key="1">
    <source>
        <dbReference type="HAMAP-Rule" id="MF_00412"/>
    </source>
</evidence>
<sequence>MTESVLDYMTRLGRAAREASRVIGRASTAQKNRALQAAADALDAARAELTAANELDLAAGRASGLEPALLDRLALTPARIDGMITGLRQVASLPDPVGAIRDMSYRPSGIQVGKMRTPLGVIGIIYESRPNVTIDAASLCLKSGNATILRGGSEAIHSNRAIATCIQRGLAEAGLPAAVVQVVETTDREAVGALISMPEFVDVIVPRGGRGLIERISRDARVPVIKHLDGICHIYVSQHADLDKAWNVAFNAKTYRYGICGAMETLLVDQQVAERFLPEMARRFVEKGVELRGCERTQAIISAKPATEADWHTEYLDAILSIRVVDGLNQAIEHINHYGSHHTDSIISEHQGEARQFMAEVDSASVMLNTPTCFADGFEYGLGAEIGISTDKLHARGPVGLEGLTCEKYVVIGDGQLRGQGSC</sequence>
<gene>
    <name evidence="1" type="primary">proA</name>
    <name type="ordered locus">PP_4811</name>
</gene>
<feature type="chain" id="PRO_0000189768" description="Gamma-glutamyl phosphate reductase">
    <location>
        <begin position="1"/>
        <end position="423"/>
    </location>
</feature>
<accession>Q88DL4</accession>
<protein>
    <recommendedName>
        <fullName evidence="1">Gamma-glutamyl phosphate reductase</fullName>
        <shortName evidence="1">GPR</shortName>
        <ecNumber evidence="1">1.2.1.41</ecNumber>
    </recommendedName>
    <alternativeName>
        <fullName evidence="1">Glutamate-5-semialdehyde dehydrogenase</fullName>
    </alternativeName>
    <alternativeName>
        <fullName evidence="1">Glutamyl-gamma-semialdehyde dehydrogenase</fullName>
        <shortName evidence="1">GSA dehydrogenase</shortName>
    </alternativeName>
</protein>
<name>PROA_PSEPK</name>
<keyword id="KW-0028">Amino-acid biosynthesis</keyword>
<keyword id="KW-0963">Cytoplasm</keyword>
<keyword id="KW-0521">NADP</keyword>
<keyword id="KW-0560">Oxidoreductase</keyword>
<keyword id="KW-0641">Proline biosynthesis</keyword>
<keyword id="KW-1185">Reference proteome</keyword>
<organism>
    <name type="scientific">Pseudomonas putida (strain ATCC 47054 / DSM 6125 / CFBP 8728 / NCIMB 11950 / KT2440)</name>
    <dbReference type="NCBI Taxonomy" id="160488"/>
    <lineage>
        <taxon>Bacteria</taxon>
        <taxon>Pseudomonadati</taxon>
        <taxon>Pseudomonadota</taxon>
        <taxon>Gammaproteobacteria</taxon>
        <taxon>Pseudomonadales</taxon>
        <taxon>Pseudomonadaceae</taxon>
        <taxon>Pseudomonas</taxon>
    </lineage>
</organism>
<reference key="1">
    <citation type="journal article" date="2002" name="Environ. Microbiol.">
        <title>Complete genome sequence and comparative analysis of the metabolically versatile Pseudomonas putida KT2440.</title>
        <authorList>
            <person name="Nelson K.E."/>
            <person name="Weinel C."/>
            <person name="Paulsen I.T."/>
            <person name="Dodson R.J."/>
            <person name="Hilbert H."/>
            <person name="Martins dos Santos V.A.P."/>
            <person name="Fouts D.E."/>
            <person name="Gill S.R."/>
            <person name="Pop M."/>
            <person name="Holmes M."/>
            <person name="Brinkac L.M."/>
            <person name="Beanan M.J."/>
            <person name="DeBoy R.T."/>
            <person name="Daugherty S.C."/>
            <person name="Kolonay J.F."/>
            <person name="Madupu R."/>
            <person name="Nelson W.C."/>
            <person name="White O."/>
            <person name="Peterson J.D."/>
            <person name="Khouri H.M."/>
            <person name="Hance I."/>
            <person name="Chris Lee P."/>
            <person name="Holtzapple E.K."/>
            <person name="Scanlan D."/>
            <person name="Tran K."/>
            <person name="Moazzez A."/>
            <person name="Utterback T.R."/>
            <person name="Rizzo M."/>
            <person name="Lee K."/>
            <person name="Kosack D."/>
            <person name="Moestl D."/>
            <person name="Wedler H."/>
            <person name="Lauber J."/>
            <person name="Stjepandic D."/>
            <person name="Hoheisel J."/>
            <person name="Straetz M."/>
            <person name="Heim S."/>
            <person name="Kiewitz C."/>
            <person name="Eisen J.A."/>
            <person name="Timmis K.N."/>
            <person name="Duesterhoeft A."/>
            <person name="Tuemmler B."/>
            <person name="Fraser C.M."/>
        </authorList>
    </citation>
    <scope>NUCLEOTIDE SEQUENCE [LARGE SCALE GENOMIC DNA]</scope>
    <source>
        <strain>ATCC 47054 / DSM 6125 / CFBP 8728 / NCIMB 11950 / KT2440</strain>
    </source>
</reference>
<comment type="function">
    <text evidence="1">Catalyzes the NADPH-dependent reduction of L-glutamate 5-phosphate into L-glutamate 5-semialdehyde and phosphate. The product spontaneously undergoes cyclization to form 1-pyrroline-5-carboxylate.</text>
</comment>
<comment type="catalytic activity">
    <reaction evidence="1">
        <text>L-glutamate 5-semialdehyde + phosphate + NADP(+) = L-glutamyl 5-phosphate + NADPH + H(+)</text>
        <dbReference type="Rhea" id="RHEA:19541"/>
        <dbReference type="ChEBI" id="CHEBI:15378"/>
        <dbReference type="ChEBI" id="CHEBI:43474"/>
        <dbReference type="ChEBI" id="CHEBI:57783"/>
        <dbReference type="ChEBI" id="CHEBI:58066"/>
        <dbReference type="ChEBI" id="CHEBI:58274"/>
        <dbReference type="ChEBI" id="CHEBI:58349"/>
        <dbReference type="EC" id="1.2.1.41"/>
    </reaction>
</comment>
<comment type="pathway">
    <text evidence="1">Amino-acid biosynthesis; L-proline biosynthesis; L-glutamate 5-semialdehyde from L-glutamate: step 2/2.</text>
</comment>
<comment type="subcellular location">
    <subcellularLocation>
        <location evidence="1">Cytoplasm</location>
    </subcellularLocation>
</comment>
<comment type="similarity">
    <text evidence="1">Belongs to the gamma-glutamyl phosphate reductase family.</text>
</comment>
<dbReference type="EC" id="1.2.1.41" evidence="1"/>
<dbReference type="EMBL" id="AE015451">
    <property type="protein sequence ID" value="AAN70380.1"/>
    <property type="molecule type" value="Genomic_DNA"/>
</dbReference>
<dbReference type="RefSeq" id="NP_746916.1">
    <property type="nucleotide sequence ID" value="NC_002947.4"/>
</dbReference>
<dbReference type="RefSeq" id="WP_004576854.1">
    <property type="nucleotide sequence ID" value="NZ_CP169744.1"/>
</dbReference>
<dbReference type="SMR" id="Q88DL4"/>
<dbReference type="STRING" id="160488.PP_4811"/>
<dbReference type="PaxDb" id="160488-PP_4811"/>
<dbReference type="KEGG" id="ppu:PP_4811"/>
<dbReference type="PATRIC" id="fig|160488.4.peg.5134"/>
<dbReference type="eggNOG" id="COG0014">
    <property type="taxonomic scope" value="Bacteria"/>
</dbReference>
<dbReference type="HOGENOM" id="CLU_030231_0_0_6"/>
<dbReference type="OrthoDB" id="9809970at2"/>
<dbReference type="PhylomeDB" id="Q88DL4"/>
<dbReference type="BioCyc" id="PPUT160488:G1G01-5148-MONOMER"/>
<dbReference type="UniPathway" id="UPA00098">
    <property type="reaction ID" value="UER00360"/>
</dbReference>
<dbReference type="Proteomes" id="UP000000556">
    <property type="component" value="Chromosome"/>
</dbReference>
<dbReference type="GO" id="GO:0005737">
    <property type="term" value="C:cytoplasm"/>
    <property type="evidence" value="ECO:0007669"/>
    <property type="project" value="UniProtKB-SubCell"/>
</dbReference>
<dbReference type="GO" id="GO:0004350">
    <property type="term" value="F:glutamate-5-semialdehyde dehydrogenase activity"/>
    <property type="evidence" value="ECO:0007669"/>
    <property type="project" value="UniProtKB-UniRule"/>
</dbReference>
<dbReference type="GO" id="GO:0050661">
    <property type="term" value="F:NADP binding"/>
    <property type="evidence" value="ECO:0007669"/>
    <property type="project" value="InterPro"/>
</dbReference>
<dbReference type="GO" id="GO:0055129">
    <property type="term" value="P:L-proline biosynthetic process"/>
    <property type="evidence" value="ECO:0007669"/>
    <property type="project" value="UniProtKB-UniRule"/>
</dbReference>
<dbReference type="CDD" id="cd07079">
    <property type="entry name" value="ALDH_F18-19_ProA-GPR"/>
    <property type="match status" value="1"/>
</dbReference>
<dbReference type="FunFam" id="3.40.309.10:FF:000006">
    <property type="entry name" value="Gamma-glutamyl phosphate reductase"/>
    <property type="match status" value="1"/>
</dbReference>
<dbReference type="Gene3D" id="3.40.605.10">
    <property type="entry name" value="Aldehyde Dehydrogenase, Chain A, domain 1"/>
    <property type="match status" value="1"/>
</dbReference>
<dbReference type="Gene3D" id="3.40.309.10">
    <property type="entry name" value="Aldehyde Dehydrogenase, Chain A, domain 2"/>
    <property type="match status" value="1"/>
</dbReference>
<dbReference type="HAMAP" id="MF_00412">
    <property type="entry name" value="ProA"/>
    <property type="match status" value="1"/>
</dbReference>
<dbReference type="InterPro" id="IPR016161">
    <property type="entry name" value="Ald_DH/histidinol_DH"/>
</dbReference>
<dbReference type="InterPro" id="IPR016163">
    <property type="entry name" value="Ald_DH_C"/>
</dbReference>
<dbReference type="InterPro" id="IPR016162">
    <property type="entry name" value="Ald_DH_N"/>
</dbReference>
<dbReference type="InterPro" id="IPR015590">
    <property type="entry name" value="Aldehyde_DH_dom"/>
</dbReference>
<dbReference type="InterPro" id="IPR020593">
    <property type="entry name" value="G-glutamylP_reductase_CS"/>
</dbReference>
<dbReference type="InterPro" id="IPR012134">
    <property type="entry name" value="Glu-5-SA_DH"/>
</dbReference>
<dbReference type="InterPro" id="IPR000965">
    <property type="entry name" value="GPR_dom"/>
</dbReference>
<dbReference type="NCBIfam" id="NF001221">
    <property type="entry name" value="PRK00197.1"/>
    <property type="match status" value="1"/>
</dbReference>
<dbReference type="NCBIfam" id="TIGR00407">
    <property type="entry name" value="proA"/>
    <property type="match status" value="1"/>
</dbReference>
<dbReference type="PANTHER" id="PTHR11063:SF8">
    <property type="entry name" value="DELTA-1-PYRROLINE-5-CARBOXYLATE SYNTHASE"/>
    <property type="match status" value="1"/>
</dbReference>
<dbReference type="PANTHER" id="PTHR11063">
    <property type="entry name" value="GLUTAMATE SEMIALDEHYDE DEHYDROGENASE"/>
    <property type="match status" value="1"/>
</dbReference>
<dbReference type="Pfam" id="PF00171">
    <property type="entry name" value="Aldedh"/>
    <property type="match status" value="1"/>
</dbReference>
<dbReference type="PIRSF" id="PIRSF000151">
    <property type="entry name" value="GPR"/>
    <property type="match status" value="1"/>
</dbReference>
<dbReference type="SUPFAM" id="SSF53720">
    <property type="entry name" value="ALDH-like"/>
    <property type="match status" value="1"/>
</dbReference>
<dbReference type="PROSITE" id="PS01223">
    <property type="entry name" value="PROA"/>
    <property type="match status" value="1"/>
</dbReference>